<sequence length="652" mass="73894">MSDSDKTAARVAPKYVPISSFVESSFFTKLSELKLNEFKLDSSKRDIHGFITSPRRLNKFNDQPTLNLDLQSFDIAEKEANNLHISGELYNVNTIEEFKNINKSDLLNDWGKEVYTRLIQTESLDYKAFNWFFILTFSDLKKYKFYYWVAFPTLNAPWFVTSTRDDSLVEKHTKNITRLLENDGDSENLAFSQLYQVVGESYLDLNSIRSSRNGVFVFLDGCLNKETKPSVQLKNYLYFLAYKGFEDVDVIVYRNDGSSFQVHYELDTDSFNKNVQPKITGWERTSQGKLGPKLADLGSLINPHQLADQAVDLNLKLMKWRIAPELNLDIVKEQRVLLLGAGTLGSYVARALMGWGVRKITFVDNGRISYSNPVRQPLFSFKDCFSDNGQGEMKAARAAEALKEIFPGVSSEGISLEVPMIGHPVSDEAKSKSNFGTLSQLFDDHDIIYLLMDSRESRWLPTVLGYAKNKIVINAALGFDSYLVMRHGNLSQPEESRLGCYYCNDVVAPNDSLTDRTLDQMCTVTRPGVALMASALAVELLVSILQHPDGSKAAQDESTKFGGVPHQIRGFLHNFQQTKLYAPNYKHCSACSHTVISKFEEEGWEFVKKCLNDSGYLEEICGLKQVQEEAEKATEDLMKDMDLDDEDSEWLD</sequence>
<proteinExistence type="inferred from homology"/>
<gene>
    <name type="primary">ATG7</name>
    <name type="ORF">PICST_42095</name>
</gene>
<protein>
    <recommendedName>
        <fullName>Ubiquitin-like modifier-activating enzyme ATG7</fullName>
    </recommendedName>
    <alternativeName>
        <fullName>ATG12-activating enzyme E1 ATG7</fullName>
    </alternativeName>
    <alternativeName>
        <fullName>Autophagy-related protein 7</fullName>
    </alternativeName>
</protein>
<feature type="chain" id="PRO_0000317870" description="Ubiquitin-like modifier-activating enzyme ATG7">
    <location>
        <begin position="1"/>
        <end position="652"/>
    </location>
</feature>
<feature type="short sequence motif" description="GXGXXG motif" evidence="1">
    <location>
        <begin position="340"/>
        <end position="345"/>
    </location>
</feature>
<feature type="active site" description="Glycyl thioester intermediate" evidence="1">
    <location>
        <position position="522"/>
    </location>
</feature>
<accession>A3LPA1</accession>
<reference key="1">
    <citation type="journal article" date="2007" name="Nat. Biotechnol.">
        <title>Genome sequence of the lignocellulose-bioconverting and xylose-fermenting yeast Pichia stipitis.</title>
        <authorList>
            <person name="Jeffries T.W."/>
            <person name="Grigoriev I.V."/>
            <person name="Grimwood J."/>
            <person name="Laplaza J.M."/>
            <person name="Aerts A."/>
            <person name="Salamov A."/>
            <person name="Schmutz J."/>
            <person name="Lindquist E."/>
            <person name="Dehal P."/>
            <person name="Shapiro H."/>
            <person name="Jin Y.-S."/>
            <person name="Passoth V."/>
            <person name="Richardson P.M."/>
        </authorList>
    </citation>
    <scope>NUCLEOTIDE SEQUENCE [LARGE SCALE GENOMIC DNA]</scope>
    <source>
        <strain>ATCC 58785 / CBS 6054 / NBRC 10063 / NRRL Y-11545</strain>
    </source>
</reference>
<name>ATG7_PICST</name>
<comment type="function">
    <text evidence="1">E1-like activating enzyme involved in the 2 ubiquitin-like systems required for cytoplasm to vacuole transport (Cvt) and autophagy. Activates ATG12 for its conjugation with ATG5 and ATG8 for its conjugation with phosphatidylethanolamine. Both systems are needed for the ATG8 association to Cvt vesicles and autophagosomes membranes. Autophagy is essential for maintenance of amino acid levels and protein synthesis under nitrogen starvation. Required for selective autophagic degradation of the nucleus (nucleophagy) as well as for mitophagy which contributes to regulate mitochondrial quantity and quality by eliminating the mitochondria to a basal level to fulfill cellular energy requirements and preventing excess ROS production. Plays a role in the regulation of filamentous growth and chronological longevity (By similarity).</text>
</comment>
<comment type="subunit">
    <text evidence="1">Homodimer.</text>
</comment>
<comment type="subcellular location">
    <subcellularLocation>
        <location evidence="1">Cytoplasm</location>
    </subcellularLocation>
    <subcellularLocation>
        <location evidence="1">Preautophagosomal structure</location>
    </subcellularLocation>
</comment>
<comment type="domain">
    <text evidence="1">The GxGxxG motif is important for the function, possibly through binding with ATP.</text>
</comment>
<comment type="similarity">
    <text evidence="2">Belongs to the ATG7 family.</text>
</comment>
<organism>
    <name type="scientific">Scheffersomyces stipitis (strain ATCC 58785 / CBS 6054 / NBRC 10063 / NRRL Y-11545)</name>
    <name type="common">Yeast</name>
    <name type="synonym">Pichia stipitis</name>
    <dbReference type="NCBI Taxonomy" id="322104"/>
    <lineage>
        <taxon>Eukaryota</taxon>
        <taxon>Fungi</taxon>
        <taxon>Dikarya</taxon>
        <taxon>Ascomycota</taxon>
        <taxon>Saccharomycotina</taxon>
        <taxon>Pichiomycetes</taxon>
        <taxon>Debaryomycetaceae</taxon>
        <taxon>Scheffersomyces</taxon>
    </lineage>
</organism>
<evidence type="ECO:0000250" key="1"/>
<evidence type="ECO:0000305" key="2"/>
<keyword id="KW-0072">Autophagy</keyword>
<keyword id="KW-0963">Cytoplasm</keyword>
<keyword id="KW-0653">Protein transport</keyword>
<keyword id="KW-1185">Reference proteome</keyword>
<keyword id="KW-0813">Transport</keyword>
<keyword id="KW-0833">Ubl conjugation pathway</keyword>
<dbReference type="EMBL" id="CP000496">
    <property type="protein sequence ID" value="ABN65006.2"/>
    <property type="molecule type" value="Genomic_DNA"/>
</dbReference>
<dbReference type="RefSeq" id="XP_001383035.2">
    <property type="nucleotide sequence ID" value="XM_001382998.1"/>
</dbReference>
<dbReference type="SMR" id="A3LPA1"/>
<dbReference type="FunCoup" id="A3LPA1">
    <property type="interactions" value="761"/>
</dbReference>
<dbReference type="STRING" id="322104.A3LPA1"/>
<dbReference type="GeneID" id="4836974"/>
<dbReference type="KEGG" id="pic:PICST_42095"/>
<dbReference type="eggNOG" id="KOG2337">
    <property type="taxonomic scope" value="Eukaryota"/>
</dbReference>
<dbReference type="HOGENOM" id="CLU_012998_2_1_1"/>
<dbReference type="InParanoid" id="A3LPA1"/>
<dbReference type="OMA" id="RQIWDAI"/>
<dbReference type="OrthoDB" id="338614at2759"/>
<dbReference type="Proteomes" id="UP000002258">
    <property type="component" value="Chromosome 2"/>
</dbReference>
<dbReference type="GO" id="GO:0005829">
    <property type="term" value="C:cytosol"/>
    <property type="evidence" value="ECO:0007669"/>
    <property type="project" value="EnsemblFungi"/>
</dbReference>
<dbReference type="GO" id="GO:0097632">
    <property type="term" value="C:extrinsic component of phagophore assembly site membrane"/>
    <property type="evidence" value="ECO:0007669"/>
    <property type="project" value="EnsemblFungi"/>
</dbReference>
<dbReference type="GO" id="GO:0019778">
    <property type="term" value="F:Atg12 activating enzyme activity"/>
    <property type="evidence" value="ECO:0007669"/>
    <property type="project" value="EnsemblFungi"/>
</dbReference>
<dbReference type="GO" id="GO:0019779">
    <property type="term" value="F:Atg8 activating enzyme activity"/>
    <property type="evidence" value="ECO:0007669"/>
    <property type="project" value="EnsemblFungi"/>
</dbReference>
<dbReference type="GO" id="GO:0042802">
    <property type="term" value="F:identical protein binding"/>
    <property type="evidence" value="ECO:0007669"/>
    <property type="project" value="EnsemblFungi"/>
</dbReference>
<dbReference type="GO" id="GO:0000045">
    <property type="term" value="P:autophagosome assembly"/>
    <property type="evidence" value="ECO:0007669"/>
    <property type="project" value="TreeGrafter"/>
</dbReference>
<dbReference type="GO" id="GO:0000422">
    <property type="term" value="P:autophagy of mitochondrion"/>
    <property type="evidence" value="ECO:0007669"/>
    <property type="project" value="EnsemblFungi"/>
</dbReference>
<dbReference type="GO" id="GO:0006995">
    <property type="term" value="P:cellular response to nitrogen starvation"/>
    <property type="evidence" value="ECO:0007669"/>
    <property type="project" value="TreeGrafter"/>
</dbReference>
<dbReference type="GO" id="GO:0032258">
    <property type="term" value="P:cytoplasm to vacuole targeting by the Cvt pathway"/>
    <property type="evidence" value="ECO:0007669"/>
    <property type="project" value="EnsemblFungi"/>
</dbReference>
<dbReference type="GO" id="GO:0034727">
    <property type="term" value="P:piecemeal microautophagy of the nucleus"/>
    <property type="evidence" value="ECO:0007669"/>
    <property type="project" value="EnsemblFungi"/>
</dbReference>
<dbReference type="GO" id="GO:0032446">
    <property type="term" value="P:protein modification by small protein conjugation"/>
    <property type="evidence" value="ECO:0007669"/>
    <property type="project" value="EnsemblFungi"/>
</dbReference>
<dbReference type="CDD" id="cd01486">
    <property type="entry name" value="Apg7"/>
    <property type="match status" value="1"/>
</dbReference>
<dbReference type="FunFam" id="3.40.50.720:FF:000243">
    <property type="entry name" value="Ubiquitin-like modifier-activating enzyme ATG7"/>
    <property type="match status" value="1"/>
</dbReference>
<dbReference type="Gene3D" id="3.40.50.720">
    <property type="entry name" value="NAD(P)-binding Rossmann-like Domain"/>
    <property type="match status" value="1"/>
</dbReference>
<dbReference type="Gene3D" id="3.40.140.100">
    <property type="entry name" value="Ubiquitin-like modifier-activating enzyme ATG7 C-terminal domain"/>
    <property type="match status" value="1"/>
</dbReference>
<dbReference type="Gene3D" id="3.40.140.70">
    <property type="entry name" value="Ubiquitin-like modifier-activating enzyme ATG7 N-terminal domain"/>
    <property type="match status" value="1"/>
</dbReference>
<dbReference type="InterPro" id="IPR006285">
    <property type="entry name" value="Atg7"/>
</dbReference>
<dbReference type="InterPro" id="IPR032197">
    <property type="entry name" value="Atg7_N"/>
</dbReference>
<dbReference type="InterPro" id="IPR042522">
    <property type="entry name" value="Atg7_N_1"/>
</dbReference>
<dbReference type="InterPro" id="IPR042523">
    <property type="entry name" value="Atg7_N_2"/>
</dbReference>
<dbReference type="InterPro" id="IPR045886">
    <property type="entry name" value="ThiF/MoeB/HesA"/>
</dbReference>
<dbReference type="InterPro" id="IPR000594">
    <property type="entry name" value="ThiF_NAD_FAD-bd"/>
</dbReference>
<dbReference type="InterPro" id="IPR035985">
    <property type="entry name" value="Ubiquitin-activating_enz"/>
</dbReference>
<dbReference type="NCBIfam" id="TIGR01381">
    <property type="entry name" value="E1_like_apg7"/>
    <property type="match status" value="1"/>
</dbReference>
<dbReference type="PANTHER" id="PTHR10953">
    <property type="entry name" value="UBIQUITIN-ACTIVATING ENZYME E1"/>
    <property type="match status" value="1"/>
</dbReference>
<dbReference type="PANTHER" id="PTHR10953:SF3">
    <property type="entry name" value="UBIQUITIN-LIKE MODIFIER-ACTIVATING ENZYME ATG7"/>
    <property type="match status" value="1"/>
</dbReference>
<dbReference type="Pfam" id="PF16420">
    <property type="entry name" value="ATG7_N"/>
    <property type="match status" value="1"/>
</dbReference>
<dbReference type="Pfam" id="PF00899">
    <property type="entry name" value="ThiF"/>
    <property type="match status" value="1"/>
</dbReference>
<dbReference type="SUPFAM" id="SSF69572">
    <property type="entry name" value="Activating enzymes of the ubiquitin-like proteins"/>
    <property type="match status" value="1"/>
</dbReference>